<gene>
    <name type="ordered locus">YFL065C</name>
</gene>
<accession>P43539</accession>
<accession>D6VTG6</accession>
<dbReference type="EMBL" id="D50617">
    <property type="protein sequence ID" value="BAA09176.1"/>
    <property type="molecule type" value="Genomic_DNA"/>
</dbReference>
<dbReference type="EMBL" id="BK006940">
    <property type="protein sequence ID" value="DAA12376.1"/>
    <property type="molecule type" value="Genomic_DNA"/>
</dbReference>
<dbReference type="PIR" id="S56190">
    <property type="entry name" value="S56190"/>
</dbReference>
<dbReference type="RefSeq" id="NP_116590.1">
    <property type="nucleotide sequence ID" value="NM_001179902.1"/>
</dbReference>
<dbReference type="SMR" id="P43539"/>
<dbReference type="BioGRID" id="31083">
    <property type="interactions" value="20"/>
</dbReference>
<dbReference type="DIP" id="DIP-5440N"/>
<dbReference type="FunCoup" id="P43539">
    <property type="interactions" value="23"/>
</dbReference>
<dbReference type="STRING" id="4932.YFL065C"/>
<dbReference type="PaxDb" id="4932-YFL065C"/>
<dbReference type="PeptideAtlas" id="P43539"/>
<dbReference type="EnsemblFungi" id="YFL065C_mRNA">
    <property type="protein sequence ID" value="YFL065C"/>
    <property type="gene ID" value="YFL065C"/>
</dbReference>
<dbReference type="GeneID" id="850479"/>
<dbReference type="KEGG" id="sce:YFL065C"/>
<dbReference type="AGR" id="SGD:S000001829"/>
<dbReference type="SGD" id="S000001829">
    <property type="gene designation" value="YFL065C"/>
</dbReference>
<dbReference type="VEuPathDB" id="FungiDB:YFL065C"/>
<dbReference type="GeneTree" id="ENSGT00940000178469"/>
<dbReference type="HOGENOM" id="CLU_2279641_0_0_1"/>
<dbReference type="InParanoid" id="P43539"/>
<dbReference type="OrthoDB" id="4037931at2759"/>
<dbReference type="BioCyc" id="YEAST:G3O-30403-MONOMER"/>
<dbReference type="PRO" id="PR:P43539"/>
<dbReference type="Proteomes" id="UP000002311">
    <property type="component" value="Chromosome VI"/>
</dbReference>
<dbReference type="RNAct" id="P43539">
    <property type="molecule type" value="protein"/>
</dbReference>
<dbReference type="InterPro" id="IPR050978">
    <property type="entry name" value="Y'_ATP-dependent_helicase"/>
</dbReference>
<dbReference type="PANTHER" id="PTHR31583">
    <property type="match status" value="1"/>
</dbReference>
<dbReference type="PANTHER" id="PTHR31583:SF2">
    <property type="match status" value="1"/>
</dbReference>
<proteinExistence type="predicted"/>
<keyword id="KW-1185">Reference proteome</keyword>
<feature type="chain" id="PRO_0000202668" description="Uncharacterized protein YFL065C">
    <location>
        <begin position="1"/>
        <end position="102"/>
    </location>
</feature>
<name>YFG5_YEAST</name>
<protein>
    <recommendedName>
        <fullName>Uncharacterized protein YFL065C</fullName>
    </recommendedName>
</protein>
<organism>
    <name type="scientific">Saccharomyces cerevisiae (strain ATCC 204508 / S288c)</name>
    <name type="common">Baker's yeast</name>
    <dbReference type="NCBI Taxonomy" id="559292"/>
    <lineage>
        <taxon>Eukaryota</taxon>
        <taxon>Fungi</taxon>
        <taxon>Dikarya</taxon>
        <taxon>Ascomycota</taxon>
        <taxon>Saccharomycotina</taxon>
        <taxon>Saccharomycetes</taxon>
        <taxon>Saccharomycetales</taxon>
        <taxon>Saccharomycetaceae</taxon>
        <taxon>Saccharomyces</taxon>
    </lineage>
</organism>
<sequence>MRTFTDFVSGAPIVRSLQKSTIRKYGYNLAPHMFLLLHVDELSIFSAYQASLPGEKKVDTERLKRDLCPRKPIEIKYFSQICNDMMNKKDRLGDVLRVCCPS</sequence>
<reference key="1">
    <citation type="journal article" date="1995" name="Nat. Genet.">
        <title>Analysis of the nucleotide sequence of chromosome VI from Saccharomyces cerevisiae.</title>
        <authorList>
            <person name="Murakami Y."/>
            <person name="Naitou M."/>
            <person name="Hagiwara H."/>
            <person name="Shibata T."/>
            <person name="Ozawa M."/>
            <person name="Sasanuma S."/>
            <person name="Sasanuma M."/>
            <person name="Tsuchiya Y."/>
            <person name="Soeda E."/>
            <person name="Yokoyama K."/>
            <person name="Yamazaki M."/>
            <person name="Tashiro H."/>
            <person name="Eki T."/>
        </authorList>
    </citation>
    <scope>NUCLEOTIDE SEQUENCE [LARGE SCALE GENOMIC DNA]</scope>
    <source>
        <strain>ATCC 204508 / S288c</strain>
    </source>
</reference>
<reference key="2">
    <citation type="journal article" date="2014" name="G3 (Bethesda)">
        <title>The reference genome sequence of Saccharomyces cerevisiae: Then and now.</title>
        <authorList>
            <person name="Engel S.R."/>
            <person name="Dietrich F.S."/>
            <person name="Fisk D.G."/>
            <person name="Binkley G."/>
            <person name="Balakrishnan R."/>
            <person name="Costanzo M.C."/>
            <person name="Dwight S.S."/>
            <person name="Hitz B.C."/>
            <person name="Karra K."/>
            <person name="Nash R.S."/>
            <person name="Weng S."/>
            <person name="Wong E.D."/>
            <person name="Lloyd P."/>
            <person name="Skrzypek M.S."/>
            <person name="Miyasato S.R."/>
            <person name="Simison M."/>
            <person name="Cherry J.M."/>
        </authorList>
    </citation>
    <scope>GENOME REANNOTATION</scope>
    <source>
        <strain>ATCC 204508 / S288c</strain>
    </source>
</reference>